<reference key="1">
    <citation type="journal article" date="2009" name="PLoS Genet.">
        <title>Organised genome dynamics in the Escherichia coli species results in highly diverse adaptive paths.</title>
        <authorList>
            <person name="Touchon M."/>
            <person name="Hoede C."/>
            <person name="Tenaillon O."/>
            <person name="Barbe V."/>
            <person name="Baeriswyl S."/>
            <person name="Bidet P."/>
            <person name="Bingen E."/>
            <person name="Bonacorsi S."/>
            <person name="Bouchier C."/>
            <person name="Bouvet O."/>
            <person name="Calteau A."/>
            <person name="Chiapello H."/>
            <person name="Clermont O."/>
            <person name="Cruveiller S."/>
            <person name="Danchin A."/>
            <person name="Diard M."/>
            <person name="Dossat C."/>
            <person name="Karoui M.E."/>
            <person name="Frapy E."/>
            <person name="Garry L."/>
            <person name="Ghigo J.M."/>
            <person name="Gilles A.M."/>
            <person name="Johnson J."/>
            <person name="Le Bouguenec C."/>
            <person name="Lescat M."/>
            <person name="Mangenot S."/>
            <person name="Martinez-Jehanne V."/>
            <person name="Matic I."/>
            <person name="Nassif X."/>
            <person name="Oztas S."/>
            <person name="Petit M.A."/>
            <person name="Pichon C."/>
            <person name="Rouy Z."/>
            <person name="Ruf C.S."/>
            <person name="Schneider D."/>
            <person name="Tourret J."/>
            <person name="Vacherie B."/>
            <person name="Vallenet D."/>
            <person name="Medigue C."/>
            <person name="Rocha E.P.C."/>
            <person name="Denamur E."/>
        </authorList>
    </citation>
    <scope>NUCLEOTIDE SEQUENCE [LARGE SCALE GENOMIC DNA]</scope>
    <source>
        <strain>S88 / ExPEC</strain>
    </source>
</reference>
<evidence type="ECO:0000255" key="1">
    <source>
        <dbReference type="HAMAP-Rule" id="MF_00804"/>
    </source>
</evidence>
<feature type="chain" id="PRO_1000133946" description="Betaine aldehyde dehydrogenase">
    <location>
        <begin position="1"/>
        <end position="490"/>
    </location>
</feature>
<feature type="active site" description="Charge relay system" evidence="1">
    <location>
        <position position="162"/>
    </location>
</feature>
<feature type="active site" description="Proton acceptor" evidence="1">
    <location>
        <position position="252"/>
    </location>
</feature>
<feature type="active site" description="Nucleophile" evidence="1">
    <location>
        <position position="286"/>
    </location>
</feature>
<feature type="active site" description="Charge relay system" evidence="1">
    <location>
        <position position="464"/>
    </location>
</feature>
<feature type="binding site" evidence="1">
    <location>
        <position position="26"/>
    </location>
    <ligand>
        <name>K(+)</name>
        <dbReference type="ChEBI" id="CHEBI:29103"/>
        <label>1</label>
    </ligand>
</feature>
<feature type="binding site" evidence="1">
    <location>
        <position position="27"/>
    </location>
    <ligand>
        <name>K(+)</name>
        <dbReference type="ChEBI" id="CHEBI:29103"/>
        <label>1</label>
    </ligand>
</feature>
<feature type="binding site" evidence="1">
    <location>
        <position position="93"/>
    </location>
    <ligand>
        <name>K(+)</name>
        <dbReference type="ChEBI" id="CHEBI:29103"/>
        <label>1</label>
    </ligand>
</feature>
<feature type="binding site" evidence="1">
    <location>
        <begin position="150"/>
        <end position="152"/>
    </location>
    <ligand>
        <name>NAD(+)</name>
        <dbReference type="ChEBI" id="CHEBI:57540"/>
    </ligand>
</feature>
<feature type="binding site" evidence="1">
    <location>
        <begin position="176"/>
        <end position="179"/>
    </location>
    <ligand>
        <name>NAD(+)</name>
        <dbReference type="ChEBI" id="CHEBI:57540"/>
    </ligand>
</feature>
<feature type="binding site" evidence="1">
    <location>
        <position position="180"/>
    </location>
    <ligand>
        <name>K(+)</name>
        <dbReference type="ChEBI" id="CHEBI:29103"/>
        <label>1</label>
    </ligand>
</feature>
<feature type="binding site" evidence="1">
    <location>
        <begin position="230"/>
        <end position="233"/>
    </location>
    <ligand>
        <name>NAD(+)</name>
        <dbReference type="ChEBI" id="CHEBI:57540"/>
    </ligand>
</feature>
<feature type="binding site" evidence="1">
    <location>
        <position position="246"/>
    </location>
    <ligand>
        <name>K(+)</name>
        <dbReference type="ChEBI" id="CHEBI:29103"/>
        <label>2</label>
    </ligand>
</feature>
<feature type="binding site" evidence="1">
    <location>
        <position position="254"/>
    </location>
    <ligand>
        <name>NAD(+)</name>
        <dbReference type="ChEBI" id="CHEBI:57540"/>
    </ligand>
</feature>
<feature type="binding site" description="covalent" evidence="1">
    <location>
        <position position="286"/>
    </location>
    <ligand>
        <name>NAD(+)</name>
        <dbReference type="ChEBI" id="CHEBI:57540"/>
    </ligand>
</feature>
<feature type="binding site" evidence="1">
    <location>
        <position position="387"/>
    </location>
    <ligand>
        <name>NAD(+)</name>
        <dbReference type="ChEBI" id="CHEBI:57540"/>
    </ligand>
</feature>
<feature type="binding site" evidence="1">
    <location>
        <position position="457"/>
    </location>
    <ligand>
        <name>K(+)</name>
        <dbReference type="ChEBI" id="CHEBI:29103"/>
        <label>2</label>
    </ligand>
</feature>
<feature type="binding site" evidence="1">
    <location>
        <position position="460"/>
    </location>
    <ligand>
        <name>K(+)</name>
        <dbReference type="ChEBI" id="CHEBI:29103"/>
        <label>2</label>
    </ligand>
</feature>
<feature type="site" description="Seems to be a necessary countercharge to the potassium cations" evidence="1">
    <location>
        <position position="248"/>
    </location>
</feature>
<feature type="modified residue" description="Cysteine sulfenic acid (-SOH)" evidence="1">
    <location>
        <position position="286"/>
    </location>
</feature>
<accession>B7MCD1</accession>
<protein>
    <recommendedName>
        <fullName evidence="1">Betaine aldehyde dehydrogenase</fullName>
        <shortName evidence="1">BADH</shortName>
        <ecNumber evidence="1">1.2.1.8</ecNumber>
    </recommendedName>
</protein>
<organism>
    <name type="scientific">Escherichia coli O45:K1 (strain S88 / ExPEC)</name>
    <dbReference type="NCBI Taxonomy" id="585035"/>
    <lineage>
        <taxon>Bacteria</taxon>
        <taxon>Pseudomonadati</taxon>
        <taxon>Pseudomonadota</taxon>
        <taxon>Gammaproteobacteria</taxon>
        <taxon>Enterobacterales</taxon>
        <taxon>Enterobacteriaceae</taxon>
        <taxon>Escherichia</taxon>
    </lineage>
</organism>
<sequence>MSRMAEQQLYIHGGYTSATSGRTFETINPANGNVLATVQAAGREDVDRAVKSAQQGQKIWAAMTAMERSRILRRAVDILRERNDELAKLETLDTGKAYSETSTVDIVTGADVLEYYAGLIPALEGSQIPLRETSFVYTRREPLGVVAGIGAWNYPIQIALWKSAPALAAGNAMIFKPSEVTPLTALKLAEIYSEAGLPDGVFNVLPGVGAETGQYLTDHPGIAKVSFTGGVASGKKVMANSAASSLKEVTMELGGKSPLIVFDDADLDLAADITMMANFFSSGQVCTNGTRVFVPTKCKAAFEQKILARVERIRAGDVFDPQTNFGPLVSFPHRDNVLRYIAKGIEEGARVLCGGDVLKGDSFDNGAWVAPTVFTDCSDDMTIVREEIFGPVMSILTYESEDEVIRRANDTDYGLAAGIVTADLNLAHRVIHQLEAGICWINTWGESPAEMPVGGYKHSGIGRENGVMTLQSYTQVKSIQVEMAKFQSIF</sequence>
<dbReference type="EC" id="1.2.1.8" evidence="1"/>
<dbReference type="EMBL" id="CU928161">
    <property type="protein sequence ID" value="CAR01671.1"/>
    <property type="molecule type" value="Genomic_DNA"/>
</dbReference>
<dbReference type="RefSeq" id="WP_001350625.1">
    <property type="nucleotide sequence ID" value="NC_011742.1"/>
</dbReference>
<dbReference type="SMR" id="B7MCD1"/>
<dbReference type="KEGG" id="ecz:ECS88_0320"/>
<dbReference type="HOGENOM" id="CLU_005391_0_0_6"/>
<dbReference type="UniPathway" id="UPA00529">
    <property type="reaction ID" value="UER00386"/>
</dbReference>
<dbReference type="Proteomes" id="UP000000747">
    <property type="component" value="Chromosome"/>
</dbReference>
<dbReference type="GO" id="GO:0008802">
    <property type="term" value="F:betaine-aldehyde dehydrogenase (NAD+) activity"/>
    <property type="evidence" value="ECO:0007669"/>
    <property type="project" value="UniProtKB-UniRule"/>
</dbReference>
<dbReference type="GO" id="GO:0046872">
    <property type="term" value="F:metal ion binding"/>
    <property type="evidence" value="ECO:0007669"/>
    <property type="project" value="UniProtKB-KW"/>
</dbReference>
<dbReference type="GO" id="GO:0019285">
    <property type="term" value="P:glycine betaine biosynthetic process from choline"/>
    <property type="evidence" value="ECO:0007669"/>
    <property type="project" value="UniProtKB-UniRule"/>
</dbReference>
<dbReference type="CDD" id="cd07090">
    <property type="entry name" value="ALDH_F9_TMBADH"/>
    <property type="match status" value="1"/>
</dbReference>
<dbReference type="FunFam" id="3.40.309.10:FF:000014">
    <property type="entry name" value="NAD/NADP-dependent betaine aldehyde dehydrogenase"/>
    <property type="match status" value="1"/>
</dbReference>
<dbReference type="FunFam" id="3.40.605.10:FF:000007">
    <property type="entry name" value="NAD/NADP-dependent betaine aldehyde dehydrogenase"/>
    <property type="match status" value="1"/>
</dbReference>
<dbReference type="Gene3D" id="3.40.605.10">
    <property type="entry name" value="Aldehyde Dehydrogenase, Chain A, domain 1"/>
    <property type="match status" value="1"/>
</dbReference>
<dbReference type="Gene3D" id="3.40.309.10">
    <property type="entry name" value="Aldehyde Dehydrogenase, Chain A, domain 2"/>
    <property type="match status" value="1"/>
</dbReference>
<dbReference type="HAMAP" id="MF_00804">
    <property type="entry name" value="BADH"/>
    <property type="match status" value="1"/>
</dbReference>
<dbReference type="InterPro" id="IPR016161">
    <property type="entry name" value="Ald_DH/histidinol_DH"/>
</dbReference>
<dbReference type="InterPro" id="IPR016163">
    <property type="entry name" value="Ald_DH_C"/>
</dbReference>
<dbReference type="InterPro" id="IPR016160">
    <property type="entry name" value="Ald_DH_CS_CYS"/>
</dbReference>
<dbReference type="InterPro" id="IPR029510">
    <property type="entry name" value="Ald_DH_CS_GLU"/>
</dbReference>
<dbReference type="InterPro" id="IPR016162">
    <property type="entry name" value="Ald_DH_N"/>
</dbReference>
<dbReference type="InterPro" id="IPR015590">
    <property type="entry name" value="Aldehyde_DH_dom"/>
</dbReference>
<dbReference type="InterPro" id="IPR011264">
    <property type="entry name" value="BADH"/>
</dbReference>
<dbReference type="NCBIfam" id="TIGR01804">
    <property type="entry name" value="BADH"/>
    <property type="match status" value="1"/>
</dbReference>
<dbReference type="NCBIfam" id="NF009725">
    <property type="entry name" value="PRK13252.1"/>
    <property type="match status" value="1"/>
</dbReference>
<dbReference type="PANTHER" id="PTHR11699">
    <property type="entry name" value="ALDEHYDE DEHYDROGENASE-RELATED"/>
    <property type="match status" value="1"/>
</dbReference>
<dbReference type="Pfam" id="PF00171">
    <property type="entry name" value="Aldedh"/>
    <property type="match status" value="1"/>
</dbReference>
<dbReference type="SUPFAM" id="SSF53720">
    <property type="entry name" value="ALDH-like"/>
    <property type="match status" value="1"/>
</dbReference>
<dbReference type="PROSITE" id="PS00070">
    <property type="entry name" value="ALDEHYDE_DEHYDR_CYS"/>
    <property type="match status" value="1"/>
</dbReference>
<dbReference type="PROSITE" id="PS00687">
    <property type="entry name" value="ALDEHYDE_DEHYDR_GLU"/>
    <property type="match status" value="1"/>
</dbReference>
<proteinExistence type="inferred from homology"/>
<name>BETB_ECO45</name>
<keyword id="KW-0479">Metal-binding</keyword>
<keyword id="KW-0520">NAD</keyword>
<keyword id="KW-0521">NADP</keyword>
<keyword id="KW-0558">Oxidation</keyword>
<keyword id="KW-0560">Oxidoreductase</keyword>
<keyword id="KW-0630">Potassium</keyword>
<keyword id="KW-1185">Reference proteome</keyword>
<gene>
    <name evidence="1" type="primary">betB</name>
    <name type="ordered locus">ECS88_0320</name>
</gene>
<comment type="function">
    <text evidence="1">Involved in the biosynthesis of the osmoprotectant glycine betaine. Catalyzes the irreversible oxidation of betaine aldehyde to the corresponding acid.</text>
</comment>
<comment type="catalytic activity">
    <reaction evidence="1">
        <text>betaine aldehyde + NAD(+) + H2O = glycine betaine + NADH + 2 H(+)</text>
        <dbReference type="Rhea" id="RHEA:15305"/>
        <dbReference type="ChEBI" id="CHEBI:15377"/>
        <dbReference type="ChEBI" id="CHEBI:15378"/>
        <dbReference type="ChEBI" id="CHEBI:15710"/>
        <dbReference type="ChEBI" id="CHEBI:17750"/>
        <dbReference type="ChEBI" id="CHEBI:57540"/>
        <dbReference type="ChEBI" id="CHEBI:57945"/>
        <dbReference type="EC" id="1.2.1.8"/>
    </reaction>
    <physiologicalReaction direction="left-to-right" evidence="1">
        <dbReference type="Rhea" id="RHEA:15306"/>
    </physiologicalReaction>
</comment>
<comment type="cofactor">
    <cofactor evidence="1">
        <name>K(+)</name>
        <dbReference type="ChEBI" id="CHEBI:29103"/>
    </cofactor>
    <text evidence="1">Binds 2 potassium ions per subunit.</text>
</comment>
<comment type="pathway">
    <text evidence="1">Amine and polyamine biosynthesis; betaine biosynthesis via choline pathway; betaine from betaine aldehyde: step 1/1.</text>
</comment>
<comment type="subunit">
    <text evidence="1">Dimer of dimers.</text>
</comment>
<comment type="similarity">
    <text evidence="1">Belongs to the aldehyde dehydrogenase family.</text>
</comment>